<protein>
    <recommendedName>
        <fullName>Glycylpeptide N-tetradecanoyltransferase</fullName>
        <ecNumber>2.3.1.97</ecNumber>
    </recommendedName>
    <alternativeName>
        <fullName>Myristoyl-CoA:protein N-myristoyltransferase</fullName>
        <shortName>NMT</shortName>
    </alternativeName>
    <alternativeName>
        <fullName>Peptide N-myristoyltransferase</fullName>
    </alternativeName>
</protein>
<gene>
    <name type="ordered locus">CNBN0070</name>
</gene>
<reference key="1">
    <citation type="journal article" date="2005" name="Science">
        <title>The genome of the basidiomycetous yeast and human pathogen Cryptococcus neoformans.</title>
        <authorList>
            <person name="Loftus B.J."/>
            <person name="Fung E."/>
            <person name="Roncaglia P."/>
            <person name="Rowley D."/>
            <person name="Amedeo P."/>
            <person name="Bruno D."/>
            <person name="Vamathevan J."/>
            <person name="Miranda M."/>
            <person name="Anderson I.J."/>
            <person name="Fraser J.A."/>
            <person name="Allen J.E."/>
            <person name="Bosdet I.E."/>
            <person name="Brent M.R."/>
            <person name="Chiu R."/>
            <person name="Doering T.L."/>
            <person name="Donlin M.J."/>
            <person name="D'Souza C.A."/>
            <person name="Fox D.S."/>
            <person name="Grinberg V."/>
            <person name="Fu J."/>
            <person name="Fukushima M."/>
            <person name="Haas B.J."/>
            <person name="Huang J.C."/>
            <person name="Janbon G."/>
            <person name="Jones S.J.M."/>
            <person name="Koo H.L."/>
            <person name="Krzywinski M.I."/>
            <person name="Kwon-Chung K.J."/>
            <person name="Lengeler K.B."/>
            <person name="Maiti R."/>
            <person name="Marra M.A."/>
            <person name="Marra R.E."/>
            <person name="Mathewson C.A."/>
            <person name="Mitchell T.G."/>
            <person name="Pertea M."/>
            <person name="Riggs F.R."/>
            <person name="Salzberg S.L."/>
            <person name="Schein J.E."/>
            <person name="Shvartsbeyn A."/>
            <person name="Shin H."/>
            <person name="Shumway M."/>
            <person name="Specht C.A."/>
            <person name="Suh B.B."/>
            <person name="Tenney A."/>
            <person name="Utterback T.R."/>
            <person name="Wickes B.L."/>
            <person name="Wortman J.R."/>
            <person name="Wye N.H."/>
            <person name="Kronstad J.W."/>
            <person name="Lodge J.K."/>
            <person name="Heitman J."/>
            <person name="Davis R.W."/>
            <person name="Fraser C.M."/>
            <person name="Hyman R.W."/>
        </authorList>
    </citation>
    <scope>NUCLEOTIDE SEQUENCE [LARGE SCALE GENOMIC DNA]</scope>
    <source>
        <strain>B-3501A</strain>
    </source>
</reference>
<dbReference type="EC" id="2.3.1.97"/>
<dbReference type="EMBL" id="AAEY01000065">
    <property type="protein sequence ID" value="EAL17377.1"/>
    <property type="status" value="ALT_SEQ"/>
    <property type="molecule type" value="Genomic_DNA"/>
</dbReference>
<dbReference type="RefSeq" id="XP_772024.1">
    <property type="nucleotide sequence ID" value="XM_766931.1"/>
</dbReference>
<dbReference type="SMR" id="P0CP21"/>
<dbReference type="EnsemblFungi" id="AAW47000">
    <property type="protein sequence ID" value="AAW47000"/>
    <property type="gene ID" value="CNN00080"/>
</dbReference>
<dbReference type="GeneID" id="4939624"/>
<dbReference type="KEGG" id="cnb:CNBN0070"/>
<dbReference type="HOGENOM" id="CLU_022882_2_0_1"/>
<dbReference type="OrthoDB" id="4913at5206"/>
<dbReference type="GO" id="GO:0005829">
    <property type="term" value="C:cytosol"/>
    <property type="evidence" value="ECO:0007669"/>
    <property type="project" value="EnsemblFungi"/>
</dbReference>
<dbReference type="GO" id="GO:0004379">
    <property type="term" value="F:glycylpeptide N-tetradecanoyltransferase activity"/>
    <property type="evidence" value="ECO:0007669"/>
    <property type="project" value="UniProtKB-EC"/>
</dbReference>
<dbReference type="FunFam" id="3.40.630.30:FF:000042">
    <property type="entry name" value="Glycylpeptide N-tetradecanoyltransferase"/>
    <property type="match status" value="1"/>
</dbReference>
<dbReference type="FunFam" id="3.40.630.30:FF:000056">
    <property type="entry name" value="Glycylpeptide N-tetradecanoyltransferase"/>
    <property type="match status" value="1"/>
</dbReference>
<dbReference type="Gene3D" id="3.40.630.30">
    <property type="match status" value="2"/>
</dbReference>
<dbReference type="InterPro" id="IPR016181">
    <property type="entry name" value="Acyl_CoA_acyltransferase"/>
</dbReference>
<dbReference type="InterPro" id="IPR000903">
    <property type="entry name" value="NMT"/>
</dbReference>
<dbReference type="InterPro" id="IPR022677">
    <property type="entry name" value="NMT_C"/>
</dbReference>
<dbReference type="InterPro" id="IPR022678">
    <property type="entry name" value="NMT_CS"/>
</dbReference>
<dbReference type="InterPro" id="IPR022676">
    <property type="entry name" value="NMT_N"/>
</dbReference>
<dbReference type="PANTHER" id="PTHR11377:SF5">
    <property type="entry name" value="GLYCYLPEPTIDE N-TETRADECANOYLTRANSFERASE"/>
    <property type="match status" value="1"/>
</dbReference>
<dbReference type="PANTHER" id="PTHR11377">
    <property type="entry name" value="N-MYRISTOYL TRANSFERASE"/>
    <property type="match status" value="1"/>
</dbReference>
<dbReference type="Pfam" id="PF01233">
    <property type="entry name" value="NMT"/>
    <property type="match status" value="1"/>
</dbReference>
<dbReference type="Pfam" id="PF02799">
    <property type="entry name" value="NMT_C"/>
    <property type="match status" value="1"/>
</dbReference>
<dbReference type="PIRSF" id="PIRSF015892">
    <property type="entry name" value="N-myristl_transf"/>
    <property type="match status" value="1"/>
</dbReference>
<dbReference type="SUPFAM" id="SSF55729">
    <property type="entry name" value="Acyl-CoA N-acyltransferases (Nat)"/>
    <property type="match status" value="2"/>
</dbReference>
<dbReference type="PROSITE" id="PS00975">
    <property type="entry name" value="NMT_1"/>
    <property type="match status" value="1"/>
</dbReference>
<dbReference type="PROSITE" id="PS00976">
    <property type="entry name" value="NMT_2"/>
    <property type="match status" value="1"/>
</dbReference>
<organism>
    <name type="scientific">Cryptococcus neoformans var. neoformans serotype D (strain B-3501A)</name>
    <name type="common">Filobasidiella neoformans</name>
    <dbReference type="NCBI Taxonomy" id="283643"/>
    <lineage>
        <taxon>Eukaryota</taxon>
        <taxon>Fungi</taxon>
        <taxon>Dikarya</taxon>
        <taxon>Basidiomycota</taxon>
        <taxon>Agaricomycotina</taxon>
        <taxon>Tremellomycetes</taxon>
        <taxon>Tremellales</taxon>
        <taxon>Cryptococcaceae</taxon>
        <taxon>Cryptococcus</taxon>
        <taxon>Cryptococcus neoformans species complex</taxon>
    </lineage>
</organism>
<sequence length="493" mass="54964">MDSSDSKAATDEEIRRALKAADLMKILDGKIALGNKSGTKNLGEHKFWKTQPVPQITGSGAPAPIEEGPIDDPKTPADVRQEPGVLPAGFEWSTIDINDEEQSKEVYVLLCENYVEDDDAMFRFNYSREFLLWALTAPGYLPDWHIGVRVQKTKKLVAFISGIKIDIRVRAKTFPAAEINFLCVHKKLRSKRLAPVLIKEVTRRVNLTNIWQAIYTAGVILPTPIGTCRYFHRNLNPPKLVDIGFSPLPRGSTIARLVQQYSVPSHPRIPGFREMKKEDVPQVGALLRRYLDRFDVAQAFRDDDEVEHWLLSGQGKEVGGRRVEQVVWAYVVEDPTTHRITDLISFYALPSTIMKHPKHNLLNAAYMFYYATDVVFPPSSSSANSDVDVDANAGESSVAAVGTGGEDAKTKKKLETRLNALTADILIIAKQAGFDVFNALTLLDNNMFLQEQKFGPGDGYLNYYLYNWNCAPIDGGHHSTTAKQGSKIGVVML</sequence>
<accession>P0CP21</accession>
<accession>Q55HW5</accession>
<accession>Q5K7E9</accession>
<keyword id="KW-0012">Acyltransferase</keyword>
<keyword id="KW-0963">Cytoplasm</keyword>
<keyword id="KW-0808">Transferase</keyword>
<comment type="function">
    <text evidence="1">Adds a myristoyl group to the N-terminal glycine residue of certain cellular proteins.</text>
</comment>
<comment type="catalytic activity">
    <reaction>
        <text>N-terminal glycyl-[protein] + tetradecanoyl-CoA = N-tetradecanoylglycyl-[protein] + CoA + H(+)</text>
        <dbReference type="Rhea" id="RHEA:15521"/>
        <dbReference type="Rhea" id="RHEA-COMP:12666"/>
        <dbReference type="Rhea" id="RHEA-COMP:12667"/>
        <dbReference type="ChEBI" id="CHEBI:15378"/>
        <dbReference type="ChEBI" id="CHEBI:57287"/>
        <dbReference type="ChEBI" id="CHEBI:57385"/>
        <dbReference type="ChEBI" id="CHEBI:64723"/>
        <dbReference type="ChEBI" id="CHEBI:133050"/>
        <dbReference type="EC" id="2.3.1.97"/>
    </reaction>
</comment>
<comment type="subunit">
    <text evidence="1">Monomer.</text>
</comment>
<comment type="subcellular location">
    <subcellularLocation>
        <location evidence="1">Cytoplasm</location>
    </subcellularLocation>
</comment>
<comment type="similarity">
    <text evidence="4">Belongs to the NMT family.</text>
</comment>
<comment type="sequence caution" evidence="4">
    <conflict type="erroneous gene model prediction">
        <sequence resource="EMBL-CDS" id="EAL17377"/>
    </conflict>
</comment>
<proteinExistence type="inferred from homology"/>
<feature type="chain" id="PRO_0000410167" description="Glycylpeptide N-tetradecanoyltransferase">
    <location>
        <begin position="1"/>
        <end position="493"/>
    </location>
</feature>
<feature type="region of interest" description="Disordered" evidence="3">
    <location>
        <begin position="53"/>
        <end position="73"/>
    </location>
</feature>
<feature type="active site" description="Proton acceptor; via carboxylate" evidence="1">
    <location>
        <position position="493"/>
    </location>
</feature>
<feature type="binding site" evidence="2">
    <location>
        <begin position="45"/>
        <end position="48"/>
    </location>
    <ligand>
        <name>tetradecanoyl-CoA</name>
        <dbReference type="ChEBI" id="CHEBI:57385"/>
    </ligand>
</feature>
<feature type="binding site" evidence="2">
    <location>
        <begin position="182"/>
        <end position="184"/>
    </location>
    <ligand>
        <name>tetradecanoyl-CoA</name>
        <dbReference type="ChEBI" id="CHEBI:57385"/>
    </ligand>
</feature>
<feature type="binding site" evidence="2">
    <location>
        <begin position="190"/>
        <end position="194"/>
    </location>
    <ligand>
        <name>tetradecanoyl-CoA</name>
        <dbReference type="ChEBI" id="CHEBI:57385"/>
    </ligand>
</feature>
<evidence type="ECO:0000250" key="1"/>
<evidence type="ECO:0000250" key="2">
    <source>
        <dbReference type="UniProtKB" id="P14743"/>
    </source>
</evidence>
<evidence type="ECO:0000256" key="3">
    <source>
        <dbReference type="SAM" id="MobiDB-lite"/>
    </source>
</evidence>
<evidence type="ECO:0000305" key="4"/>
<name>NMT_CRYNB</name>